<feature type="chain" id="PRO_0000109097" description="UDP-N-acetylmuramoylalanine--D-glutamate ligase">
    <location>
        <begin position="1"/>
        <end position="450"/>
    </location>
</feature>
<feature type="binding site" evidence="1">
    <location>
        <begin position="119"/>
        <end position="125"/>
    </location>
    <ligand>
        <name>ATP</name>
        <dbReference type="ChEBI" id="CHEBI:30616"/>
    </ligand>
</feature>
<sequence>MKVIDQFKNKKVLVLGLAKSGESAARLLDKLGAIVTVNDGKPFEDNPAAQSLLEEGIKVITGGHPLELLDEEFALMVKNPGIPYNNPMIEKALAKRIPVLTEVELAYLISEAPIIGITGSNGKTTTTTMIGEVLTAAGQHGLLSGNIGYPASQVAQIASDKDTLVMELSSFQLMGVQEFHPEIAVITNLMPTHIDYHGSFSEYVAAKWNIQNKMTAADFLVLNFNQDLAKDLTSKTEATVVPFSTLEKVDGAYLEDGQLYFRGEVVMAANEIGVPGSHNVENALATIAVAKLRDVDNQTIKETLSAFGGVKHRLQFVDDIKGVKFYNDSKSTNILATQKALSGFDNSKVVLIAGGLDRGNEFDELVPDITGLKKMVILGQSAERVKRAADKAGVAYVEATDIADATRKAYELATQGDVVLLSPANASWDMYANFEVRGDLFIDTVAELKE</sequence>
<comment type="function">
    <text evidence="1">Cell wall formation. Catalyzes the addition of glutamate to the nucleotide precursor UDP-N-acetylmuramoyl-L-alanine (UMA).</text>
</comment>
<comment type="catalytic activity">
    <reaction evidence="1">
        <text>UDP-N-acetyl-alpha-D-muramoyl-L-alanine + D-glutamate + ATP = UDP-N-acetyl-alpha-D-muramoyl-L-alanyl-D-glutamate + ADP + phosphate + H(+)</text>
        <dbReference type="Rhea" id="RHEA:16429"/>
        <dbReference type="ChEBI" id="CHEBI:15378"/>
        <dbReference type="ChEBI" id="CHEBI:29986"/>
        <dbReference type="ChEBI" id="CHEBI:30616"/>
        <dbReference type="ChEBI" id="CHEBI:43474"/>
        <dbReference type="ChEBI" id="CHEBI:83898"/>
        <dbReference type="ChEBI" id="CHEBI:83900"/>
        <dbReference type="ChEBI" id="CHEBI:456216"/>
        <dbReference type="EC" id="6.3.2.9"/>
    </reaction>
</comment>
<comment type="pathway">
    <text evidence="1">Cell wall biogenesis; peptidoglycan biosynthesis.</text>
</comment>
<comment type="subcellular location">
    <subcellularLocation>
        <location evidence="1">Cytoplasm</location>
    </subcellularLocation>
</comment>
<comment type="similarity">
    <text evidence="1">Belongs to the MurCDEF family.</text>
</comment>
<dbReference type="EC" id="6.3.2.9" evidence="1"/>
<dbReference type="EMBL" id="AE007317">
    <property type="protein sequence ID" value="AAK99407.1"/>
    <property type="molecule type" value="Genomic_DNA"/>
</dbReference>
<dbReference type="PIR" id="C97947">
    <property type="entry name" value="C97947"/>
</dbReference>
<dbReference type="RefSeq" id="NP_358197.1">
    <property type="nucleotide sequence ID" value="NC_003098.1"/>
</dbReference>
<dbReference type="RefSeq" id="WP_000863046.1">
    <property type="nucleotide sequence ID" value="NC_003098.1"/>
</dbReference>
<dbReference type="SMR" id="Q8DQM2"/>
<dbReference type="STRING" id="171101.spr0603"/>
<dbReference type="KEGG" id="spr:spr0603"/>
<dbReference type="PATRIC" id="fig|171101.6.peg.670"/>
<dbReference type="eggNOG" id="COG0771">
    <property type="taxonomic scope" value="Bacteria"/>
</dbReference>
<dbReference type="HOGENOM" id="CLU_032540_0_1_9"/>
<dbReference type="UniPathway" id="UPA00219"/>
<dbReference type="Proteomes" id="UP000000586">
    <property type="component" value="Chromosome"/>
</dbReference>
<dbReference type="GO" id="GO:0005737">
    <property type="term" value="C:cytoplasm"/>
    <property type="evidence" value="ECO:0007669"/>
    <property type="project" value="UniProtKB-SubCell"/>
</dbReference>
<dbReference type="GO" id="GO:0005524">
    <property type="term" value="F:ATP binding"/>
    <property type="evidence" value="ECO:0007669"/>
    <property type="project" value="UniProtKB-UniRule"/>
</dbReference>
<dbReference type="GO" id="GO:0008764">
    <property type="term" value="F:UDP-N-acetylmuramoylalanine-D-glutamate ligase activity"/>
    <property type="evidence" value="ECO:0007669"/>
    <property type="project" value="UniProtKB-UniRule"/>
</dbReference>
<dbReference type="GO" id="GO:0051301">
    <property type="term" value="P:cell division"/>
    <property type="evidence" value="ECO:0007669"/>
    <property type="project" value="UniProtKB-KW"/>
</dbReference>
<dbReference type="GO" id="GO:0071555">
    <property type="term" value="P:cell wall organization"/>
    <property type="evidence" value="ECO:0007669"/>
    <property type="project" value="UniProtKB-KW"/>
</dbReference>
<dbReference type="GO" id="GO:0009252">
    <property type="term" value="P:peptidoglycan biosynthetic process"/>
    <property type="evidence" value="ECO:0007669"/>
    <property type="project" value="UniProtKB-UniRule"/>
</dbReference>
<dbReference type="GO" id="GO:0008360">
    <property type="term" value="P:regulation of cell shape"/>
    <property type="evidence" value="ECO:0007669"/>
    <property type="project" value="UniProtKB-KW"/>
</dbReference>
<dbReference type="Gene3D" id="3.90.190.20">
    <property type="entry name" value="Mur ligase, C-terminal domain"/>
    <property type="match status" value="1"/>
</dbReference>
<dbReference type="Gene3D" id="3.40.1190.10">
    <property type="entry name" value="Mur-like, catalytic domain"/>
    <property type="match status" value="1"/>
</dbReference>
<dbReference type="Gene3D" id="3.40.50.720">
    <property type="entry name" value="NAD(P)-binding Rossmann-like Domain"/>
    <property type="match status" value="1"/>
</dbReference>
<dbReference type="HAMAP" id="MF_00639">
    <property type="entry name" value="MurD"/>
    <property type="match status" value="1"/>
</dbReference>
<dbReference type="InterPro" id="IPR036565">
    <property type="entry name" value="Mur-like_cat_sf"/>
</dbReference>
<dbReference type="InterPro" id="IPR004101">
    <property type="entry name" value="Mur_ligase_C"/>
</dbReference>
<dbReference type="InterPro" id="IPR036615">
    <property type="entry name" value="Mur_ligase_C_dom_sf"/>
</dbReference>
<dbReference type="InterPro" id="IPR013221">
    <property type="entry name" value="Mur_ligase_cen"/>
</dbReference>
<dbReference type="InterPro" id="IPR005762">
    <property type="entry name" value="MurD"/>
</dbReference>
<dbReference type="NCBIfam" id="TIGR01087">
    <property type="entry name" value="murD"/>
    <property type="match status" value="1"/>
</dbReference>
<dbReference type="PANTHER" id="PTHR43692">
    <property type="entry name" value="UDP-N-ACETYLMURAMOYLALANINE--D-GLUTAMATE LIGASE"/>
    <property type="match status" value="1"/>
</dbReference>
<dbReference type="PANTHER" id="PTHR43692:SF1">
    <property type="entry name" value="UDP-N-ACETYLMURAMOYLALANINE--D-GLUTAMATE LIGASE"/>
    <property type="match status" value="1"/>
</dbReference>
<dbReference type="Pfam" id="PF02875">
    <property type="entry name" value="Mur_ligase_C"/>
    <property type="match status" value="1"/>
</dbReference>
<dbReference type="Pfam" id="PF08245">
    <property type="entry name" value="Mur_ligase_M"/>
    <property type="match status" value="1"/>
</dbReference>
<dbReference type="Pfam" id="PF21799">
    <property type="entry name" value="MurD-like_N"/>
    <property type="match status" value="1"/>
</dbReference>
<dbReference type="SUPFAM" id="SSF51984">
    <property type="entry name" value="MurCD N-terminal domain"/>
    <property type="match status" value="1"/>
</dbReference>
<dbReference type="SUPFAM" id="SSF53623">
    <property type="entry name" value="MurD-like peptide ligases, catalytic domain"/>
    <property type="match status" value="1"/>
</dbReference>
<dbReference type="SUPFAM" id="SSF53244">
    <property type="entry name" value="MurD-like peptide ligases, peptide-binding domain"/>
    <property type="match status" value="1"/>
</dbReference>
<gene>
    <name evidence="1" type="primary">murD</name>
    <name type="ordered locus">spr0603</name>
</gene>
<organism>
    <name type="scientific">Streptococcus pneumoniae (strain ATCC BAA-255 / R6)</name>
    <dbReference type="NCBI Taxonomy" id="171101"/>
    <lineage>
        <taxon>Bacteria</taxon>
        <taxon>Bacillati</taxon>
        <taxon>Bacillota</taxon>
        <taxon>Bacilli</taxon>
        <taxon>Lactobacillales</taxon>
        <taxon>Streptococcaceae</taxon>
        <taxon>Streptococcus</taxon>
    </lineage>
</organism>
<keyword id="KW-0067">ATP-binding</keyword>
<keyword id="KW-0131">Cell cycle</keyword>
<keyword id="KW-0132">Cell division</keyword>
<keyword id="KW-0133">Cell shape</keyword>
<keyword id="KW-0961">Cell wall biogenesis/degradation</keyword>
<keyword id="KW-0963">Cytoplasm</keyword>
<keyword id="KW-0436">Ligase</keyword>
<keyword id="KW-0547">Nucleotide-binding</keyword>
<keyword id="KW-0573">Peptidoglycan synthesis</keyword>
<keyword id="KW-1185">Reference proteome</keyword>
<protein>
    <recommendedName>
        <fullName evidence="1">UDP-N-acetylmuramoylalanine--D-glutamate ligase</fullName>
        <ecNumber evidence="1">6.3.2.9</ecNumber>
    </recommendedName>
    <alternativeName>
        <fullName evidence="1">D-glutamic acid-adding enzyme</fullName>
    </alternativeName>
    <alternativeName>
        <fullName evidence="1">UDP-N-acetylmuramoyl-L-alanyl-D-glutamate synthetase</fullName>
    </alternativeName>
</protein>
<proteinExistence type="inferred from homology"/>
<reference key="1">
    <citation type="journal article" date="2001" name="J. Bacteriol.">
        <title>Genome of the bacterium Streptococcus pneumoniae strain R6.</title>
        <authorList>
            <person name="Hoskins J."/>
            <person name="Alborn W.E. Jr."/>
            <person name="Arnold J."/>
            <person name="Blaszczak L.C."/>
            <person name="Burgett S."/>
            <person name="DeHoff B.S."/>
            <person name="Estrem S.T."/>
            <person name="Fritz L."/>
            <person name="Fu D.-J."/>
            <person name="Fuller W."/>
            <person name="Geringer C."/>
            <person name="Gilmour R."/>
            <person name="Glass J.S."/>
            <person name="Khoja H."/>
            <person name="Kraft A.R."/>
            <person name="Lagace R.E."/>
            <person name="LeBlanc D.J."/>
            <person name="Lee L.N."/>
            <person name="Lefkowitz E.J."/>
            <person name="Lu J."/>
            <person name="Matsushima P."/>
            <person name="McAhren S.M."/>
            <person name="McHenney M."/>
            <person name="McLeaster K."/>
            <person name="Mundy C.W."/>
            <person name="Nicas T.I."/>
            <person name="Norris F.H."/>
            <person name="O'Gara M."/>
            <person name="Peery R.B."/>
            <person name="Robertson G.T."/>
            <person name="Rockey P."/>
            <person name="Sun P.-M."/>
            <person name="Winkler M.E."/>
            <person name="Yang Y."/>
            <person name="Young-Bellido M."/>
            <person name="Zhao G."/>
            <person name="Zook C.A."/>
            <person name="Baltz R.H."/>
            <person name="Jaskunas S.R."/>
            <person name="Rosteck P.R. Jr."/>
            <person name="Skatrud P.L."/>
            <person name="Glass J.I."/>
        </authorList>
    </citation>
    <scope>NUCLEOTIDE SEQUENCE [LARGE SCALE GENOMIC DNA]</scope>
    <source>
        <strain>ATCC BAA-255 / R6</strain>
    </source>
</reference>
<evidence type="ECO:0000255" key="1">
    <source>
        <dbReference type="HAMAP-Rule" id="MF_00639"/>
    </source>
</evidence>
<name>MURD_STRR6</name>
<accession>Q8DQM2</accession>